<feature type="chain" id="PRO_1000079477" description="NAD kinase">
    <location>
        <begin position="1"/>
        <end position="285"/>
    </location>
</feature>
<feature type="active site" description="Proton acceptor" evidence="1">
    <location>
        <position position="68"/>
    </location>
</feature>
<feature type="binding site" evidence="1">
    <location>
        <begin position="68"/>
        <end position="69"/>
    </location>
    <ligand>
        <name>NAD(+)</name>
        <dbReference type="ChEBI" id="CHEBI:57540"/>
    </ligand>
</feature>
<feature type="binding site" evidence="1">
    <location>
        <begin position="142"/>
        <end position="143"/>
    </location>
    <ligand>
        <name>NAD(+)</name>
        <dbReference type="ChEBI" id="CHEBI:57540"/>
    </ligand>
</feature>
<feature type="binding site" evidence="1">
    <location>
        <position position="153"/>
    </location>
    <ligand>
        <name>NAD(+)</name>
        <dbReference type="ChEBI" id="CHEBI:57540"/>
    </ligand>
</feature>
<feature type="binding site" evidence="1">
    <location>
        <position position="170"/>
    </location>
    <ligand>
        <name>NAD(+)</name>
        <dbReference type="ChEBI" id="CHEBI:57540"/>
    </ligand>
</feature>
<feature type="binding site" evidence="1">
    <location>
        <position position="172"/>
    </location>
    <ligand>
        <name>NAD(+)</name>
        <dbReference type="ChEBI" id="CHEBI:57540"/>
    </ligand>
</feature>
<feature type="binding site" evidence="1">
    <location>
        <position position="242"/>
    </location>
    <ligand>
        <name>NAD(+)</name>
        <dbReference type="ChEBI" id="CHEBI:57540"/>
    </ligand>
</feature>
<dbReference type="EC" id="2.7.1.23" evidence="1"/>
<dbReference type="EMBL" id="CP000360">
    <property type="protein sequence ID" value="ABF40049.1"/>
    <property type="molecule type" value="Genomic_DNA"/>
</dbReference>
<dbReference type="RefSeq" id="WP_011521851.1">
    <property type="nucleotide sequence ID" value="NC_008009.1"/>
</dbReference>
<dbReference type="SMR" id="Q1ISV1"/>
<dbReference type="STRING" id="204669.Acid345_1046"/>
<dbReference type="EnsemblBacteria" id="ABF40049">
    <property type="protein sequence ID" value="ABF40049"/>
    <property type="gene ID" value="Acid345_1046"/>
</dbReference>
<dbReference type="KEGG" id="aba:Acid345_1046"/>
<dbReference type="eggNOG" id="COG0061">
    <property type="taxonomic scope" value="Bacteria"/>
</dbReference>
<dbReference type="HOGENOM" id="CLU_008831_0_1_0"/>
<dbReference type="OrthoDB" id="9774737at2"/>
<dbReference type="Proteomes" id="UP000002432">
    <property type="component" value="Chromosome"/>
</dbReference>
<dbReference type="GO" id="GO:0005737">
    <property type="term" value="C:cytoplasm"/>
    <property type="evidence" value="ECO:0007669"/>
    <property type="project" value="UniProtKB-SubCell"/>
</dbReference>
<dbReference type="GO" id="GO:0005524">
    <property type="term" value="F:ATP binding"/>
    <property type="evidence" value="ECO:0007669"/>
    <property type="project" value="UniProtKB-KW"/>
</dbReference>
<dbReference type="GO" id="GO:0046872">
    <property type="term" value="F:metal ion binding"/>
    <property type="evidence" value="ECO:0007669"/>
    <property type="project" value="UniProtKB-UniRule"/>
</dbReference>
<dbReference type="GO" id="GO:0051287">
    <property type="term" value="F:NAD binding"/>
    <property type="evidence" value="ECO:0007669"/>
    <property type="project" value="UniProtKB-ARBA"/>
</dbReference>
<dbReference type="GO" id="GO:0003951">
    <property type="term" value="F:NAD+ kinase activity"/>
    <property type="evidence" value="ECO:0007669"/>
    <property type="project" value="UniProtKB-UniRule"/>
</dbReference>
<dbReference type="GO" id="GO:0019674">
    <property type="term" value="P:NAD metabolic process"/>
    <property type="evidence" value="ECO:0007669"/>
    <property type="project" value="InterPro"/>
</dbReference>
<dbReference type="GO" id="GO:0006741">
    <property type="term" value="P:NADP biosynthetic process"/>
    <property type="evidence" value="ECO:0007669"/>
    <property type="project" value="UniProtKB-UniRule"/>
</dbReference>
<dbReference type="Gene3D" id="3.40.50.10330">
    <property type="entry name" value="Probable inorganic polyphosphate/atp-NAD kinase, domain 1"/>
    <property type="match status" value="1"/>
</dbReference>
<dbReference type="Gene3D" id="2.60.200.30">
    <property type="entry name" value="Probable inorganic polyphosphate/atp-NAD kinase, domain 2"/>
    <property type="match status" value="1"/>
</dbReference>
<dbReference type="HAMAP" id="MF_00361">
    <property type="entry name" value="NAD_kinase"/>
    <property type="match status" value="1"/>
</dbReference>
<dbReference type="InterPro" id="IPR017438">
    <property type="entry name" value="ATP-NAD_kinase_N"/>
</dbReference>
<dbReference type="InterPro" id="IPR017437">
    <property type="entry name" value="ATP-NAD_kinase_PpnK-typ_C"/>
</dbReference>
<dbReference type="InterPro" id="IPR016064">
    <property type="entry name" value="NAD/diacylglycerol_kinase_sf"/>
</dbReference>
<dbReference type="InterPro" id="IPR002504">
    <property type="entry name" value="NADK"/>
</dbReference>
<dbReference type="PANTHER" id="PTHR20275">
    <property type="entry name" value="NAD KINASE"/>
    <property type="match status" value="1"/>
</dbReference>
<dbReference type="PANTHER" id="PTHR20275:SF0">
    <property type="entry name" value="NAD KINASE"/>
    <property type="match status" value="1"/>
</dbReference>
<dbReference type="Pfam" id="PF01513">
    <property type="entry name" value="NAD_kinase"/>
    <property type="match status" value="1"/>
</dbReference>
<dbReference type="Pfam" id="PF20143">
    <property type="entry name" value="NAD_kinase_C"/>
    <property type="match status" value="1"/>
</dbReference>
<dbReference type="SUPFAM" id="SSF111331">
    <property type="entry name" value="NAD kinase/diacylglycerol kinase-like"/>
    <property type="match status" value="1"/>
</dbReference>
<name>NADK_KORVE</name>
<organism>
    <name type="scientific">Koribacter versatilis (strain Ellin345)</name>
    <dbReference type="NCBI Taxonomy" id="204669"/>
    <lineage>
        <taxon>Bacteria</taxon>
        <taxon>Pseudomonadati</taxon>
        <taxon>Acidobacteriota</taxon>
        <taxon>Terriglobia</taxon>
        <taxon>Terriglobales</taxon>
        <taxon>Candidatus Korobacteraceae</taxon>
        <taxon>Candidatus Korobacter</taxon>
    </lineage>
</organism>
<gene>
    <name evidence="1" type="primary">nadK</name>
    <name type="ordered locus">Acid345_1046</name>
</gene>
<protein>
    <recommendedName>
        <fullName evidence="1">NAD kinase</fullName>
        <ecNumber evidence="1">2.7.1.23</ecNumber>
    </recommendedName>
    <alternativeName>
        <fullName evidence="1">ATP-dependent NAD kinase</fullName>
    </alternativeName>
</protein>
<reference key="1">
    <citation type="journal article" date="2009" name="Appl. Environ. Microbiol.">
        <title>Three genomes from the phylum Acidobacteria provide insight into the lifestyles of these microorganisms in soils.</title>
        <authorList>
            <person name="Ward N.L."/>
            <person name="Challacombe J.F."/>
            <person name="Janssen P.H."/>
            <person name="Henrissat B."/>
            <person name="Coutinho P.M."/>
            <person name="Wu M."/>
            <person name="Xie G."/>
            <person name="Haft D.H."/>
            <person name="Sait M."/>
            <person name="Badger J."/>
            <person name="Barabote R.D."/>
            <person name="Bradley B."/>
            <person name="Brettin T.S."/>
            <person name="Brinkac L.M."/>
            <person name="Bruce D."/>
            <person name="Creasy T."/>
            <person name="Daugherty S.C."/>
            <person name="Davidsen T.M."/>
            <person name="DeBoy R.T."/>
            <person name="Detter J.C."/>
            <person name="Dodson R.J."/>
            <person name="Durkin A.S."/>
            <person name="Ganapathy A."/>
            <person name="Gwinn-Giglio M."/>
            <person name="Han C.S."/>
            <person name="Khouri H."/>
            <person name="Kiss H."/>
            <person name="Kothari S.P."/>
            <person name="Madupu R."/>
            <person name="Nelson K.E."/>
            <person name="Nelson W.C."/>
            <person name="Paulsen I."/>
            <person name="Penn K."/>
            <person name="Ren Q."/>
            <person name="Rosovitz M.J."/>
            <person name="Selengut J.D."/>
            <person name="Shrivastava S."/>
            <person name="Sullivan S.A."/>
            <person name="Tapia R."/>
            <person name="Thompson L.S."/>
            <person name="Watkins K.L."/>
            <person name="Yang Q."/>
            <person name="Yu C."/>
            <person name="Zafar N."/>
            <person name="Zhou L."/>
            <person name="Kuske C.R."/>
        </authorList>
    </citation>
    <scope>NUCLEOTIDE SEQUENCE [LARGE SCALE GENOMIC DNA]</scope>
    <source>
        <strain>Ellin345</strain>
    </source>
</reference>
<evidence type="ECO:0000255" key="1">
    <source>
        <dbReference type="HAMAP-Rule" id="MF_00361"/>
    </source>
</evidence>
<sequence>MKTVAVLSKPSKPELSEIIPPLQEWLGQHGYEVIFDQQSAIYVSGIHGVERAKIAAMHPEFAIVLGGDGTLLSAARAVAPAGIPILAVNLGSLGFLTEVPLQDMYSTLERVIACNCPLDERTMLACDLIRDGQVLHSYTSLNDVVVNKSAIARLVGFDVSIDGRFVFNYKADGVIVATPTGSTAYSLAAGGPVLMPAVGAFQITPVCPHSLTHRPVVVPETATISIVVRSNGEAAFLTIDGQVGQPLKEGDEIVCRKADHAVKLLQMRQSFFKVLREKLKWGERE</sequence>
<keyword id="KW-0067">ATP-binding</keyword>
<keyword id="KW-0963">Cytoplasm</keyword>
<keyword id="KW-0418">Kinase</keyword>
<keyword id="KW-0520">NAD</keyword>
<keyword id="KW-0521">NADP</keyword>
<keyword id="KW-0547">Nucleotide-binding</keyword>
<keyword id="KW-1185">Reference proteome</keyword>
<keyword id="KW-0808">Transferase</keyword>
<accession>Q1ISV1</accession>
<comment type="function">
    <text evidence="1">Involved in the regulation of the intracellular balance of NAD and NADP, and is a key enzyme in the biosynthesis of NADP. Catalyzes specifically the phosphorylation on 2'-hydroxyl of the adenosine moiety of NAD to yield NADP.</text>
</comment>
<comment type="catalytic activity">
    <reaction evidence="1">
        <text>NAD(+) + ATP = ADP + NADP(+) + H(+)</text>
        <dbReference type="Rhea" id="RHEA:18629"/>
        <dbReference type="ChEBI" id="CHEBI:15378"/>
        <dbReference type="ChEBI" id="CHEBI:30616"/>
        <dbReference type="ChEBI" id="CHEBI:57540"/>
        <dbReference type="ChEBI" id="CHEBI:58349"/>
        <dbReference type="ChEBI" id="CHEBI:456216"/>
        <dbReference type="EC" id="2.7.1.23"/>
    </reaction>
</comment>
<comment type="cofactor">
    <cofactor evidence="1">
        <name>a divalent metal cation</name>
        <dbReference type="ChEBI" id="CHEBI:60240"/>
    </cofactor>
</comment>
<comment type="subcellular location">
    <subcellularLocation>
        <location evidence="1">Cytoplasm</location>
    </subcellularLocation>
</comment>
<comment type="similarity">
    <text evidence="1">Belongs to the NAD kinase family.</text>
</comment>
<proteinExistence type="inferred from homology"/>